<feature type="chain" id="PRO_0000173848" description="26S proteasome non-ATPase regulatory subunit 8">
    <location>
        <begin position="1"/>
        <end position="250"/>
    </location>
</feature>
<feature type="domain" description="PCI" evidence="2">
    <location>
        <begin position="63"/>
        <end position="233"/>
    </location>
</feature>
<dbReference type="EMBL" id="BX284602">
    <property type="protein sequence ID" value="CAA93778.1"/>
    <property type="molecule type" value="Genomic_DNA"/>
</dbReference>
<dbReference type="PIR" id="T27772">
    <property type="entry name" value="T27772"/>
</dbReference>
<dbReference type="RefSeq" id="NP_496489.1">
    <property type="nucleotide sequence ID" value="NM_064088.10"/>
</dbReference>
<dbReference type="SMR" id="Q23449"/>
<dbReference type="BioGRID" id="40091">
    <property type="interactions" value="45"/>
</dbReference>
<dbReference type="FunCoup" id="Q23449">
    <property type="interactions" value="2827"/>
</dbReference>
<dbReference type="IntAct" id="Q23449">
    <property type="interactions" value="2"/>
</dbReference>
<dbReference type="STRING" id="6239.ZK20.5.2"/>
<dbReference type="PaxDb" id="6239-ZK20.5.2"/>
<dbReference type="PeptideAtlas" id="Q23449"/>
<dbReference type="EnsemblMetazoa" id="ZK20.5.1">
    <property type="protein sequence ID" value="ZK20.5.1"/>
    <property type="gene ID" value="WBGene00004468"/>
</dbReference>
<dbReference type="GeneID" id="174786"/>
<dbReference type="KEGG" id="cel:CELE_ZK20.5"/>
<dbReference type="UCSC" id="ZK20.5.1">
    <property type="organism name" value="c. elegans"/>
</dbReference>
<dbReference type="AGR" id="WB:WBGene00004468"/>
<dbReference type="CTD" id="174786"/>
<dbReference type="WormBase" id="ZK20.5">
    <property type="protein sequence ID" value="CE06608"/>
    <property type="gene ID" value="WBGene00004468"/>
    <property type="gene designation" value="rpn-12"/>
</dbReference>
<dbReference type="eggNOG" id="KOG3151">
    <property type="taxonomic scope" value="Eukaryota"/>
</dbReference>
<dbReference type="GeneTree" id="ENSGT00390000014682"/>
<dbReference type="HOGENOM" id="CLU_046003_2_0_1"/>
<dbReference type="InParanoid" id="Q23449"/>
<dbReference type="OMA" id="HKFMGLH"/>
<dbReference type="OrthoDB" id="409122at2759"/>
<dbReference type="PhylomeDB" id="Q23449"/>
<dbReference type="Reactome" id="R-CEL-1234176">
    <property type="pathway name" value="Oxygen-dependent proline hydroxylation of Hypoxia-inducible Factor Alpha"/>
</dbReference>
<dbReference type="Reactome" id="R-CEL-1236978">
    <property type="pathway name" value="Cross-presentation of soluble exogenous antigens (endosomes)"/>
</dbReference>
<dbReference type="Reactome" id="R-CEL-187577">
    <property type="pathway name" value="SCF(Skp2)-mediated degradation of p27/p21"/>
</dbReference>
<dbReference type="Reactome" id="R-CEL-195253">
    <property type="pathway name" value="Degradation of beta-catenin by the destruction complex"/>
</dbReference>
<dbReference type="Reactome" id="R-CEL-349425">
    <property type="pathway name" value="Autodegradation of the E3 ubiquitin ligase COP1"/>
</dbReference>
<dbReference type="Reactome" id="R-CEL-350562">
    <property type="pathway name" value="Regulation of ornithine decarboxylase (ODC)"/>
</dbReference>
<dbReference type="Reactome" id="R-CEL-382556">
    <property type="pathway name" value="ABC-family proteins mediated transport"/>
</dbReference>
<dbReference type="Reactome" id="R-CEL-4608870">
    <property type="pathway name" value="Asymmetric localization of PCP proteins"/>
</dbReference>
<dbReference type="Reactome" id="R-CEL-4641258">
    <property type="pathway name" value="Degradation of DVL"/>
</dbReference>
<dbReference type="Reactome" id="R-CEL-5632684">
    <property type="pathway name" value="Hedgehog 'on' state"/>
</dbReference>
<dbReference type="Reactome" id="R-CEL-5687128">
    <property type="pathway name" value="MAPK6/MAPK4 signaling"/>
</dbReference>
<dbReference type="Reactome" id="R-CEL-5689603">
    <property type="pathway name" value="UCH proteinases"/>
</dbReference>
<dbReference type="Reactome" id="R-CEL-5689880">
    <property type="pathway name" value="Ub-specific processing proteases"/>
</dbReference>
<dbReference type="Reactome" id="R-CEL-68949">
    <property type="pathway name" value="Orc1 removal from chromatin"/>
</dbReference>
<dbReference type="Reactome" id="R-CEL-69017">
    <property type="pathway name" value="CDK-mediated phosphorylation and removal of Cdc6"/>
</dbReference>
<dbReference type="Reactome" id="R-CEL-69601">
    <property type="pathway name" value="Ubiquitin Mediated Degradation of Phosphorylated Cdc25A"/>
</dbReference>
<dbReference type="Reactome" id="R-CEL-75815">
    <property type="pathway name" value="Ubiquitin-dependent degradation of Cyclin D"/>
</dbReference>
<dbReference type="Reactome" id="R-CEL-8854050">
    <property type="pathway name" value="FBXL7 down-regulates AURKA during mitotic entry and in early mitosis"/>
</dbReference>
<dbReference type="Reactome" id="R-CEL-8939902">
    <property type="pathway name" value="Regulation of RUNX2 expression and activity"/>
</dbReference>
<dbReference type="Reactome" id="R-CEL-8941858">
    <property type="pathway name" value="Regulation of RUNX3 expression and activity"/>
</dbReference>
<dbReference type="Reactome" id="R-CEL-8948751">
    <property type="pathway name" value="Regulation of PTEN stability and activity"/>
</dbReference>
<dbReference type="Reactome" id="R-CEL-8951664">
    <property type="pathway name" value="Neddylation"/>
</dbReference>
<dbReference type="Reactome" id="R-CEL-9755511">
    <property type="pathway name" value="KEAP1-NFE2L2 pathway"/>
</dbReference>
<dbReference type="Reactome" id="R-CEL-9762114">
    <property type="pathway name" value="GSK3B and BTRC:CUL1-mediated-degradation of NFE2L2"/>
</dbReference>
<dbReference type="Reactome" id="R-CEL-983168">
    <property type="pathway name" value="Antigen processing: Ubiquitination &amp; Proteasome degradation"/>
</dbReference>
<dbReference type="Reactome" id="R-CEL-9907900">
    <property type="pathway name" value="Proteasome assembly"/>
</dbReference>
<dbReference type="PRO" id="PR:Q23449"/>
<dbReference type="Proteomes" id="UP000001940">
    <property type="component" value="Chromosome II"/>
</dbReference>
<dbReference type="Bgee" id="WBGene00004468">
    <property type="expression patterns" value="Expressed in adult organism and 4 other cell types or tissues"/>
</dbReference>
<dbReference type="GO" id="GO:0005634">
    <property type="term" value="C:nucleus"/>
    <property type="evidence" value="ECO:0000318"/>
    <property type="project" value="GO_Central"/>
</dbReference>
<dbReference type="GO" id="GO:0005838">
    <property type="term" value="C:proteasome regulatory particle"/>
    <property type="evidence" value="ECO:0000250"/>
    <property type="project" value="WormBase"/>
</dbReference>
<dbReference type="GO" id="GO:0008541">
    <property type="term" value="C:proteasome regulatory particle, lid subcomplex"/>
    <property type="evidence" value="ECO:0000318"/>
    <property type="project" value="GO_Central"/>
</dbReference>
<dbReference type="GO" id="GO:0043161">
    <property type="term" value="P:proteasome-mediated ubiquitin-dependent protein catabolic process"/>
    <property type="evidence" value="ECO:0000318"/>
    <property type="project" value="GO_Central"/>
</dbReference>
<dbReference type="FunFam" id="1.25.40.990:FF:000018">
    <property type="entry name" value="26S proteasome regulatory subunit"/>
    <property type="match status" value="1"/>
</dbReference>
<dbReference type="Gene3D" id="1.25.40.990">
    <property type="match status" value="1"/>
</dbReference>
<dbReference type="InterPro" id="IPR006746">
    <property type="entry name" value="26S_Psome_Rpn12"/>
</dbReference>
<dbReference type="InterPro" id="IPR033464">
    <property type="entry name" value="CSN8_PSD8_EIF3K"/>
</dbReference>
<dbReference type="InterPro" id="IPR000717">
    <property type="entry name" value="PCI_dom"/>
</dbReference>
<dbReference type="PANTHER" id="PTHR12387">
    <property type="entry name" value="26S PROTEASOME NON-ATPASE REGULATORY SUBUNIT 8"/>
    <property type="match status" value="1"/>
</dbReference>
<dbReference type="PANTHER" id="PTHR12387:SF0">
    <property type="entry name" value="26S PROTEASOME NON-ATPASE REGULATORY SUBUNIT 8"/>
    <property type="match status" value="1"/>
</dbReference>
<dbReference type="Pfam" id="PF10075">
    <property type="entry name" value="CSN8_PSD8_EIF3K"/>
    <property type="match status" value="1"/>
</dbReference>
<dbReference type="PROSITE" id="PS50250">
    <property type="entry name" value="PCI"/>
    <property type="match status" value="1"/>
</dbReference>
<organism>
    <name type="scientific">Caenorhabditis elegans</name>
    <dbReference type="NCBI Taxonomy" id="6239"/>
    <lineage>
        <taxon>Eukaryota</taxon>
        <taxon>Metazoa</taxon>
        <taxon>Ecdysozoa</taxon>
        <taxon>Nematoda</taxon>
        <taxon>Chromadorea</taxon>
        <taxon>Rhabditida</taxon>
        <taxon>Rhabditina</taxon>
        <taxon>Rhabditomorpha</taxon>
        <taxon>Rhabditoidea</taxon>
        <taxon>Rhabditidae</taxon>
        <taxon>Peloderinae</taxon>
        <taxon>Caenorhabditis</taxon>
    </lineage>
</organism>
<sequence length="250" mass="28795">MSAAHKNLLAVWAKEPKDLVAVEKALNELTKVLSASSDLNDKQSALASKDLYEISVLLAILKHDFETFDDYINQMHTYYTMAPENSENKHLMTGLHLMFLLAANRLSDFHMLLEQIPQKEQTSNAYISTPVRIEQSLMEGAYNKVVLTEKNIPSPFYTIFIRIMLDTIRREIATSIEKSFKVLTAKDATVMLLFDNDEQMKKFGQERKWHLDGERYVFEIEVAQEKPVNLDTVRVATQTLFYAKQLEQIV</sequence>
<protein>
    <recommendedName>
        <fullName>26S proteasome non-ATPase regulatory subunit 8</fullName>
    </recommendedName>
    <alternativeName>
        <fullName>26S proteasome regulatory subunit rpn-12</fullName>
    </alternativeName>
</protein>
<reference key="1">
    <citation type="journal article" date="1998" name="Science">
        <title>Genome sequence of the nematode C. elegans: a platform for investigating biology.</title>
        <authorList>
            <consortium name="The C. elegans sequencing consortium"/>
        </authorList>
    </citation>
    <scope>NUCLEOTIDE SEQUENCE [LARGE SCALE GENOMIC DNA]</scope>
    <source>
        <strain>Bristol N2</strain>
    </source>
</reference>
<reference key="2">
    <citation type="journal article" date="2006" name="PLoS Genet.">
        <title>Diverse chromatin remodeling genes antagonize the Rb-involved SynMuv pathways in C. elegans.</title>
        <authorList>
            <person name="Cui M."/>
            <person name="Kim E.B."/>
            <person name="Han M."/>
        </authorList>
    </citation>
    <scope>DISRUPTION PHENOTYPE</scope>
</reference>
<evidence type="ECO:0000250" key="1"/>
<evidence type="ECO:0000255" key="2">
    <source>
        <dbReference type="PROSITE-ProRule" id="PRU01185"/>
    </source>
</evidence>
<evidence type="ECO:0000269" key="3">
    <source>
    </source>
</evidence>
<evidence type="ECO:0000305" key="4"/>
<evidence type="ECO:0000312" key="5">
    <source>
        <dbReference type="WormBase" id="ZK20.5"/>
    </source>
</evidence>
<comment type="function">
    <text evidence="1">Acts as a regulatory subunit of the 26S proteasome which is involved in the ATP-dependent degradation of ubiquitinated proteins.</text>
</comment>
<comment type="disruption phenotype">
    <text evidence="3">RNAi-mediated knockdown results in sterility.</text>
</comment>
<comment type="similarity">
    <text evidence="4">Belongs to the proteasome subunit S14 family.</text>
</comment>
<proteinExistence type="inferred from homology"/>
<accession>Q23449</accession>
<keyword id="KW-0647">Proteasome</keyword>
<keyword id="KW-1185">Reference proteome</keyword>
<gene>
    <name evidence="5" type="primary">rpn-12</name>
    <name evidence="5" type="ORF">ZK20.5</name>
</gene>
<name>PSMD8_CAEEL</name>